<feature type="chain" id="PRO_0000246294" description="GPI-anchored wall transfer protein 1">
    <location>
        <begin position="1"/>
        <end position="478"/>
    </location>
</feature>
<feature type="transmembrane region" description="Helical" evidence="2">
    <location>
        <begin position="20"/>
        <end position="40"/>
    </location>
</feature>
<feature type="transmembrane region" description="Helical" evidence="2">
    <location>
        <begin position="52"/>
        <end position="72"/>
    </location>
</feature>
<feature type="transmembrane region" description="Helical" evidence="2">
    <location>
        <begin position="75"/>
        <end position="95"/>
    </location>
</feature>
<feature type="transmembrane region" description="Helical" evidence="2">
    <location>
        <begin position="126"/>
        <end position="146"/>
    </location>
</feature>
<feature type="transmembrane region" description="Helical" evidence="2">
    <location>
        <begin position="160"/>
        <end position="180"/>
    </location>
</feature>
<feature type="transmembrane region" description="Helical" evidence="2">
    <location>
        <begin position="196"/>
        <end position="213"/>
    </location>
</feature>
<feature type="transmembrane region" description="Helical" evidence="2">
    <location>
        <begin position="230"/>
        <end position="250"/>
    </location>
</feature>
<feature type="transmembrane region" description="Helical" evidence="2">
    <location>
        <begin position="255"/>
        <end position="275"/>
    </location>
</feature>
<feature type="transmembrane region" description="Helical" evidence="2">
    <location>
        <begin position="297"/>
        <end position="317"/>
    </location>
</feature>
<feature type="transmembrane region" description="Helical" evidence="2">
    <location>
        <begin position="380"/>
        <end position="400"/>
    </location>
</feature>
<feature type="transmembrane region" description="Helical" evidence="2">
    <location>
        <begin position="424"/>
        <end position="444"/>
    </location>
</feature>
<feature type="transmembrane region" description="Helical" evidence="2">
    <location>
        <begin position="449"/>
        <end position="469"/>
    </location>
</feature>
<feature type="glycosylation site" description="N-linked (GlcNAc...) asparagine" evidence="2">
    <location>
        <position position="367"/>
    </location>
</feature>
<keyword id="KW-0012">Acyltransferase</keyword>
<keyword id="KW-0256">Endoplasmic reticulum</keyword>
<keyword id="KW-0325">Glycoprotein</keyword>
<keyword id="KW-0337">GPI-anchor biosynthesis</keyword>
<keyword id="KW-0472">Membrane</keyword>
<keyword id="KW-1185">Reference proteome</keyword>
<keyword id="KW-0808">Transferase</keyword>
<keyword id="KW-0812">Transmembrane</keyword>
<keyword id="KW-1133">Transmembrane helix</keyword>
<name>GWT1_YARLI</name>
<evidence type="ECO:0000250" key="1"/>
<evidence type="ECO:0000255" key="2"/>
<evidence type="ECO:0000305" key="3"/>
<dbReference type="EC" id="2.3.-.-"/>
<dbReference type="EMBL" id="CR382129">
    <property type="protein sequence ID" value="CAG82518.1"/>
    <property type="molecule type" value="Genomic_DNA"/>
</dbReference>
<dbReference type="RefSeq" id="XP_502196.1">
    <property type="nucleotide sequence ID" value="XM_502196.1"/>
</dbReference>
<dbReference type="SMR" id="Q6CAW6"/>
<dbReference type="FunCoup" id="Q6CAW6">
    <property type="interactions" value="599"/>
</dbReference>
<dbReference type="STRING" id="284591.Q6CAW6"/>
<dbReference type="GlyCosmos" id="Q6CAW6">
    <property type="glycosylation" value="1 site, No reported glycans"/>
</dbReference>
<dbReference type="EnsemblFungi" id="CAG82518">
    <property type="protein sequence ID" value="CAG82518"/>
    <property type="gene ID" value="YALI0_C23793g"/>
</dbReference>
<dbReference type="KEGG" id="yli:2909596"/>
<dbReference type="VEuPathDB" id="FungiDB:YALI0_C23793g"/>
<dbReference type="HOGENOM" id="CLU_020802_2_2_1"/>
<dbReference type="InParanoid" id="Q6CAW6"/>
<dbReference type="OMA" id="GLYVMQP"/>
<dbReference type="OrthoDB" id="48159at4891"/>
<dbReference type="UniPathway" id="UPA00196"/>
<dbReference type="Proteomes" id="UP000001300">
    <property type="component" value="Chromosome C"/>
</dbReference>
<dbReference type="GO" id="GO:0005789">
    <property type="term" value="C:endoplasmic reticulum membrane"/>
    <property type="evidence" value="ECO:0007669"/>
    <property type="project" value="UniProtKB-SubCell"/>
</dbReference>
<dbReference type="GO" id="GO:0032216">
    <property type="term" value="F:glucosaminyl-phosphatidylinositol O-acyltransferase activity"/>
    <property type="evidence" value="ECO:0000318"/>
    <property type="project" value="GO_Central"/>
</dbReference>
<dbReference type="GO" id="GO:0006506">
    <property type="term" value="P:GPI anchor biosynthetic process"/>
    <property type="evidence" value="ECO:0000318"/>
    <property type="project" value="GO_Central"/>
</dbReference>
<dbReference type="InterPro" id="IPR009447">
    <property type="entry name" value="PIGW/GWT1"/>
</dbReference>
<dbReference type="PANTHER" id="PTHR20661">
    <property type="entry name" value="PHOSPHATIDYLINOSITOL-GLYCAN BIOSYNTHESIS CLASS W PROTEIN"/>
    <property type="match status" value="1"/>
</dbReference>
<dbReference type="PANTHER" id="PTHR20661:SF0">
    <property type="entry name" value="PHOSPHATIDYLINOSITOL-GLYCAN BIOSYNTHESIS CLASS W PROTEIN"/>
    <property type="match status" value="1"/>
</dbReference>
<dbReference type="Pfam" id="PF06423">
    <property type="entry name" value="GWT1"/>
    <property type="match status" value="1"/>
</dbReference>
<dbReference type="PIRSF" id="PIRSF017321">
    <property type="entry name" value="GWT1"/>
    <property type="match status" value="1"/>
</dbReference>
<comment type="function">
    <text evidence="1">Probable acetyltransferase, which acetylates the inositol ring of phosphatidylinositol during biosynthesis of GPI-anchor.</text>
</comment>
<comment type="pathway">
    <text>Glycolipid biosynthesis; glycosylphosphatidylinositol-anchor biosynthesis.</text>
</comment>
<comment type="subcellular location">
    <subcellularLocation>
        <location evidence="1">Endoplasmic reticulum membrane</location>
        <topology evidence="1">Multi-pass membrane protein</topology>
    </subcellularLocation>
</comment>
<comment type="similarity">
    <text evidence="3">Belongs to the PIGW family.</text>
</comment>
<reference key="1">
    <citation type="journal article" date="2004" name="Nature">
        <title>Genome evolution in yeasts.</title>
        <authorList>
            <person name="Dujon B."/>
            <person name="Sherman D."/>
            <person name="Fischer G."/>
            <person name="Durrens P."/>
            <person name="Casaregola S."/>
            <person name="Lafontaine I."/>
            <person name="de Montigny J."/>
            <person name="Marck C."/>
            <person name="Neuveglise C."/>
            <person name="Talla E."/>
            <person name="Goffard N."/>
            <person name="Frangeul L."/>
            <person name="Aigle M."/>
            <person name="Anthouard V."/>
            <person name="Babour A."/>
            <person name="Barbe V."/>
            <person name="Barnay S."/>
            <person name="Blanchin S."/>
            <person name="Beckerich J.-M."/>
            <person name="Beyne E."/>
            <person name="Bleykasten C."/>
            <person name="Boisrame A."/>
            <person name="Boyer J."/>
            <person name="Cattolico L."/>
            <person name="Confanioleri F."/>
            <person name="de Daruvar A."/>
            <person name="Despons L."/>
            <person name="Fabre E."/>
            <person name="Fairhead C."/>
            <person name="Ferry-Dumazet H."/>
            <person name="Groppi A."/>
            <person name="Hantraye F."/>
            <person name="Hennequin C."/>
            <person name="Jauniaux N."/>
            <person name="Joyet P."/>
            <person name="Kachouri R."/>
            <person name="Kerrest A."/>
            <person name="Koszul R."/>
            <person name="Lemaire M."/>
            <person name="Lesur I."/>
            <person name="Ma L."/>
            <person name="Muller H."/>
            <person name="Nicaud J.-M."/>
            <person name="Nikolski M."/>
            <person name="Oztas S."/>
            <person name="Ozier-Kalogeropoulos O."/>
            <person name="Pellenz S."/>
            <person name="Potier S."/>
            <person name="Richard G.-F."/>
            <person name="Straub M.-L."/>
            <person name="Suleau A."/>
            <person name="Swennen D."/>
            <person name="Tekaia F."/>
            <person name="Wesolowski-Louvel M."/>
            <person name="Westhof E."/>
            <person name="Wirth B."/>
            <person name="Zeniou-Meyer M."/>
            <person name="Zivanovic Y."/>
            <person name="Bolotin-Fukuhara M."/>
            <person name="Thierry A."/>
            <person name="Bouchier C."/>
            <person name="Caudron B."/>
            <person name="Scarpelli C."/>
            <person name="Gaillardin C."/>
            <person name="Weissenbach J."/>
            <person name="Wincker P."/>
            <person name="Souciet J.-L."/>
        </authorList>
    </citation>
    <scope>NUCLEOTIDE SEQUENCE [LARGE SCALE GENOMIC DNA]</scope>
    <source>
        <strain>CLIB 122 / E 150</strain>
    </source>
</reference>
<protein>
    <recommendedName>
        <fullName>GPI-anchored wall transfer protein 1</fullName>
        <ecNumber>2.3.-.-</ecNumber>
    </recommendedName>
</protein>
<proteinExistence type="inferred from homology"/>
<organism>
    <name type="scientific">Yarrowia lipolytica (strain CLIB 122 / E 150)</name>
    <name type="common">Yeast</name>
    <name type="synonym">Candida lipolytica</name>
    <dbReference type="NCBI Taxonomy" id="284591"/>
    <lineage>
        <taxon>Eukaryota</taxon>
        <taxon>Fungi</taxon>
        <taxon>Dikarya</taxon>
        <taxon>Ascomycota</taxon>
        <taxon>Saccharomycotina</taxon>
        <taxon>Dipodascomycetes</taxon>
        <taxon>Dipodascales</taxon>
        <taxon>Dipodascales incertae sedis</taxon>
        <taxon>Yarrowia</taxon>
    </lineage>
</organism>
<gene>
    <name type="primary">GWT1</name>
    <name type="ordered locus">YALI0C23793g</name>
</gene>
<accession>Q6CAW6</accession>
<sequence>MSSQKLLKEEHVSGLTGGSIGEIYVVTCVNLTAYVAWALLRKRYGDHSPWDVDFVIFDFLLNWLGLLLSVTIYSNQPLLLNALIIVPAGVWYIWGRRDRVKKRKELRPDFQQEKDKEVKRADKEMPFLSVYRGSMMVITCIAILAVDFNIFPRRFAKVETWGTSMMDLGVGSFVFSMGVVSKPRTDEPFGPQMKKSLKHAFPVLVLGFIRLISVKSLDYQEHVSEYGVHWNFFFTLGFLPPFVTLVGGLFKKTKIPLMGQSVIIALAYDVLLSVTSLKEYILTAPRVDIFSQNKEGIFSFIGYLAIFLAGQAVGTVILRTKLPEPTPANSKRTPHNLRYRQIIKYLTISSILFHVARLYYDGTIEINVSRRLVNMPYYLWVCAYNTFFLGCYAAIEVILVPIRASQPATPRVPLTLDAVNYNGLVIFLLANIGTGLINMSVNTLEASPAKTMVILVAYCAALSGISLVLYKKEIRLKL</sequence>